<proteinExistence type="evidence at transcript level"/>
<dbReference type="EC" id="2.7.11.13" evidence="2"/>
<dbReference type="EMBL" id="M13976">
    <property type="protein sequence ID" value="AAA30704.1"/>
    <property type="molecule type" value="mRNA"/>
</dbReference>
<dbReference type="PIR" id="C24664">
    <property type="entry name" value="KIBOGC"/>
</dbReference>
<dbReference type="RefSeq" id="NP_001159974.1">
    <property type="nucleotide sequence ID" value="NM_001166502.2"/>
</dbReference>
<dbReference type="SMR" id="P05128"/>
<dbReference type="BioGRID" id="159291">
    <property type="interactions" value="1"/>
</dbReference>
<dbReference type="FunCoup" id="P05128">
    <property type="interactions" value="915"/>
</dbReference>
<dbReference type="STRING" id="9913.ENSBTAP00000018020"/>
<dbReference type="PaxDb" id="9913-ENSBTAP00000018020"/>
<dbReference type="GeneID" id="282002"/>
<dbReference type="KEGG" id="bta:282002"/>
<dbReference type="CTD" id="5582"/>
<dbReference type="eggNOG" id="KOG0696">
    <property type="taxonomic scope" value="Eukaryota"/>
</dbReference>
<dbReference type="HOGENOM" id="CLU_000288_54_2_1"/>
<dbReference type="InParanoid" id="P05128"/>
<dbReference type="OrthoDB" id="63267at2759"/>
<dbReference type="Proteomes" id="UP000009136">
    <property type="component" value="Unplaced"/>
</dbReference>
<dbReference type="GO" id="GO:0005829">
    <property type="term" value="C:cytosol"/>
    <property type="evidence" value="ECO:0000250"/>
    <property type="project" value="UniProtKB"/>
</dbReference>
<dbReference type="GO" id="GO:0030425">
    <property type="term" value="C:dendrite"/>
    <property type="evidence" value="ECO:0000250"/>
    <property type="project" value="UniProtKB"/>
</dbReference>
<dbReference type="GO" id="GO:0048471">
    <property type="term" value="C:perinuclear region of cytoplasm"/>
    <property type="evidence" value="ECO:0000250"/>
    <property type="project" value="UniProtKB"/>
</dbReference>
<dbReference type="GO" id="GO:0005886">
    <property type="term" value="C:plasma membrane"/>
    <property type="evidence" value="ECO:0000250"/>
    <property type="project" value="UniProtKB"/>
</dbReference>
<dbReference type="GO" id="GO:0045202">
    <property type="term" value="C:synapse"/>
    <property type="evidence" value="ECO:0007669"/>
    <property type="project" value="UniProtKB-SubCell"/>
</dbReference>
<dbReference type="GO" id="GO:0005524">
    <property type="term" value="F:ATP binding"/>
    <property type="evidence" value="ECO:0007669"/>
    <property type="project" value="UniProtKB-KW"/>
</dbReference>
<dbReference type="GO" id="GO:0004697">
    <property type="term" value="F:diacylglycerol-dependent serine/threonine kinase activity"/>
    <property type="evidence" value="ECO:0007669"/>
    <property type="project" value="UniProtKB-EC"/>
</dbReference>
<dbReference type="GO" id="GO:0106310">
    <property type="term" value="F:protein serine kinase activity"/>
    <property type="evidence" value="ECO:0007669"/>
    <property type="project" value="RHEA"/>
</dbReference>
<dbReference type="GO" id="GO:0004674">
    <property type="term" value="F:protein serine/threonine kinase activity"/>
    <property type="evidence" value="ECO:0000318"/>
    <property type="project" value="GO_Central"/>
</dbReference>
<dbReference type="GO" id="GO:0008270">
    <property type="term" value="F:zinc ion binding"/>
    <property type="evidence" value="ECO:0007669"/>
    <property type="project" value="UniProtKB-KW"/>
</dbReference>
<dbReference type="GO" id="GO:0035556">
    <property type="term" value="P:intracellular signal transduction"/>
    <property type="evidence" value="ECO:0000318"/>
    <property type="project" value="GO_Central"/>
</dbReference>
<dbReference type="GO" id="GO:0043524">
    <property type="term" value="P:negative regulation of neuron apoptotic process"/>
    <property type="evidence" value="ECO:0000250"/>
    <property type="project" value="UniProtKB"/>
</dbReference>
<dbReference type="GO" id="GO:1901799">
    <property type="term" value="P:negative regulation of proteasomal protein catabolic process"/>
    <property type="evidence" value="ECO:0000250"/>
    <property type="project" value="UniProtKB"/>
</dbReference>
<dbReference type="GO" id="GO:0031397">
    <property type="term" value="P:negative regulation of protein ubiquitination"/>
    <property type="evidence" value="ECO:0000250"/>
    <property type="project" value="UniProtKB"/>
</dbReference>
<dbReference type="GO" id="GO:0042752">
    <property type="term" value="P:regulation of circadian rhythm"/>
    <property type="evidence" value="ECO:0000250"/>
    <property type="project" value="UniProtKB"/>
</dbReference>
<dbReference type="GO" id="GO:0032095">
    <property type="term" value="P:regulation of response to food"/>
    <property type="evidence" value="ECO:0000250"/>
    <property type="project" value="UniProtKB"/>
</dbReference>
<dbReference type="GO" id="GO:0043278">
    <property type="term" value="P:response to morphine"/>
    <property type="evidence" value="ECO:0000250"/>
    <property type="project" value="UniProtKB"/>
</dbReference>
<dbReference type="GO" id="GO:0048265">
    <property type="term" value="P:response to pain"/>
    <property type="evidence" value="ECO:0000250"/>
    <property type="project" value="UniProtKB"/>
</dbReference>
<dbReference type="GO" id="GO:0048511">
    <property type="term" value="P:rhythmic process"/>
    <property type="evidence" value="ECO:0007669"/>
    <property type="project" value="UniProtKB-KW"/>
</dbReference>
<dbReference type="CDD" id="cd20833">
    <property type="entry name" value="C1_cPKC_rpt1"/>
    <property type="match status" value="1"/>
</dbReference>
<dbReference type="CDD" id="cd20836">
    <property type="entry name" value="C1_cPKC_rpt2"/>
    <property type="match status" value="1"/>
</dbReference>
<dbReference type="CDD" id="cd04026">
    <property type="entry name" value="C2_PKC_alpha_gamma"/>
    <property type="match status" value="1"/>
</dbReference>
<dbReference type="CDD" id="cd05587">
    <property type="entry name" value="STKc_cPKC"/>
    <property type="match status" value="1"/>
</dbReference>
<dbReference type="FunFam" id="2.60.40.150:FF:000012">
    <property type="entry name" value="Kinase C alpha type"/>
    <property type="match status" value="1"/>
</dbReference>
<dbReference type="FunFam" id="1.10.510.10:FF:000023">
    <property type="entry name" value="Protein kinase C"/>
    <property type="match status" value="1"/>
</dbReference>
<dbReference type="FunFam" id="3.30.200.20:FF:000080">
    <property type="entry name" value="Protein kinase C"/>
    <property type="match status" value="1"/>
</dbReference>
<dbReference type="FunFam" id="3.30.200.20:FF:000103">
    <property type="entry name" value="Protein kinase C"/>
    <property type="match status" value="1"/>
</dbReference>
<dbReference type="FunFam" id="3.30.60.20:FF:000006">
    <property type="entry name" value="Protein kinase C"/>
    <property type="match status" value="1"/>
</dbReference>
<dbReference type="FunFam" id="3.30.60.20:FF:000011">
    <property type="entry name" value="Protein kinase C"/>
    <property type="match status" value="1"/>
</dbReference>
<dbReference type="Gene3D" id="3.30.60.20">
    <property type="match status" value="2"/>
</dbReference>
<dbReference type="Gene3D" id="2.60.40.150">
    <property type="entry name" value="C2 domain"/>
    <property type="match status" value="1"/>
</dbReference>
<dbReference type="Gene3D" id="3.30.200.20">
    <property type="entry name" value="Phosphorylase Kinase, domain 1"/>
    <property type="match status" value="2"/>
</dbReference>
<dbReference type="Gene3D" id="1.10.510.10">
    <property type="entry name" value="Transferase(Phosphotransferase) domain 1"/>
    <property type="match status" value="1"/>
</dbReference>
<dbReference type="InterPro" id="IPR000961">
    <property type="entry name" value="AGC-kinase_C"/>
</dbReference>
<dbReference type="InterPro" id="IPR046349">
    <property type="entry name" value="C1-like_sf"/>
</dbReference>
<dbReference type="InterPro" id="IPR000008">
    <property type="entry name" value="C2_dom"/>
</dbReference>
<dbReference type="InterPro" id="IPR035892">
    <property type="entry name" value="C2_domain_sf"/>
</dbReference>
<dbReference type="InterPro" id="IPR020454">
    <property type="entry name" value="DAG/PE-bd"/>
</dbReference>
<dbReference type="InterPro" id="IPR011009">
    <property type="entry name" value="Kinase-like_dom_sf"/>
</dbReference>
<dbReference type="InterPro" id="IPR002219">
    <property type="entry name" value="PE/DAG-bd"/>
</dbReference>
<dbReference type="InterPro" id="IPR017892">
    <property type="entry name" value="Pkinase_C"/>
</dbReference>
<dbReference type="InterPro" id="IPR000719">
    <property type="entry name" value="Prot_kinase_dom"/>
</dbReference>
<dbReference type="InterPro" id="IPR017441">
    <property type="entry name" value="Protein_kinase_ATP_BS"/>
</dbReference>
<dbReference type="InterPro" id="IPR014375">
    <property type="entry name" value="Protein_kinase_C_a/b/g"/>
</dbReference>
<dbReference type="InterPro" id="IPR008271">
    <property type="entry name" value="Ser/Thr_kinase_AS"/>
</dbReference>
<dbReference type="PANTHER" id="PTHR24351">
    <property type="entry name" value="RIBOSOMAL PROTEIN S6 KINASE"/>
    <property type="match status" value="1"/>
</dbReference>
<dbReference type="Pfam" id="PF00130">
    <property type="entry name" value="C1_1"/>
    <property type="match status" value="2"/>
</dbReference>
<dbReference type="Pfam" id="PF00168">
    <property type="entry name" value="C2"/>
    <property type="match status" value="1"/>
</dbReference>
<dbReference type="Pfam" id="PF00069">
    <property type="entry name" value="Pkinase"/>
    <property type="match status" value="1"/>
</dbReference>
<dbReference type="Pfam" id="PF00433">
    <property type="entry name" value="Pkinase_C"/>
    <property type="match status" value="1"/>
</dbReference>
<dbReference type="PIRSF" id="PIRSF000550">
    <property type="entry name" value="PKC_alpha"/>
    <property type="match status" value="1"/>
</dbReference>
<dbReference type="PRINTS" id="PR00360">
    <property type="entry name" value="C2DOMAIN"/>
</dbReference>
<dbReference type="PRINTS" id="PR00008">
    <property type="entry name" value="DAGPEDOMAIN"/>
</dbReference>
<dbReference type="SMART" id="SM00109">
    <property type="entry name" value="C1"/>
    <property type="match status" value="2"/>
</dbReference>
<dbReference type="SMART" id="SM00239">
    <property type="entry name" value="C2"/>
    <property type="match status" value="1"/>
</dbReference>
<dbReference type="SMART" id="SM00133">
    <property type="entry name" value="S_TK_X"/>
    <property type="match status" value="1"/>
</dbReference>
<dbReference type="SMART" id="SM00220">
    <property type="entry name" value="S_TKc"/>
    <property type="match status" value="1"/>
</dbReference>
<dbReference type="SUPFAM" id="SSF49562">
    <property type="entry name" value="C2 domain (Calcium/lipid-binding domain, CaLB)"/>
    <property type="match status" value="1"/>
</dbReference>
<dbReference type="SUPFAM" id="SSF57889">
    <property type="entry name" value="Cysteine-rich domain"/>
    <property type="match status" value="2"/>
</dbReference>
<dbReference type="SUPFAM" id="SSF56112">
    <property type="entry name" value="Protein kinase-like (PK-like)"/>
    <property type="match status" value="1"/>
</dbReference>
<dbReference type="PROSITE" id="PS51285">
    <property type="entry name" value="AGC_KINASE_CTER"/>
    <property type="match status" value="1"/>
</dbReference>
<dbReference type="PROSITE" id="PS50004">
    <property type="entry name" value="C2"/>
    <property type="match status" value="1"/>
</dbReference>
<dbReference type="PROSITE" id="PS00107">
    <property type="entry name" value="PROTEIN_KINASE_ATP"/>
    <property type="match status" value="1"/>
</dbReference>
<dbReference type="PROSITE" id="PS50011">
    <property type="entry name" value="PROTEIN_KINASE_DOM"/>
    <property type="match status" value="1"/>
</dbReference>
<dbReference type="PROSITE" id="PS00108">
    <property type="entry name" value="PROTEIN_KINASE_ST"/>
    <property type="match status" value="1"/>
</dbReference>
<dbReference type="PROSITE" id="PS00479">
    <property type="entry name" value="ZF_DAG_PE_1"/>
    <property type="match status" value="2"/>
</dbReference>
<dbReference type="PROSITE" id="PS50081">
    <property type="entry name" value="ZF_DAG_PE_2"/>
    <property type="match status" value="2"/>
</dbReference>
<feature type="chain" id="PRO_0000055688" description="Protein kinase C gamma type">
    <location>
        <begin position="1" status="less than"/>
        <end position="682"/>
    </location>
</feature>
<feature type="domain" description="C2" evidence="6">
    <location>
        <begin position="142"/>
        <end position="260"/>
    </location>
</feature>
<feature type="domain" description="Protein kinase" evidence="7">
    <location>
        <begin position="336"/>
        <end position="599"/>
    </location>
</feature>
<feature type="domain" description="AGC-kinase C-terminal" evidence="9">
    <location>
        <begin position="600"/>
        <end position="670"/>
    </location>
</feature>
<feature type="zinc finger region" description="Phorbol-ester/DAG-type 1" evidence="8">
    <location>
        <begin position="20"/>
        <end position="70"/>
    </location>
</feature>
<feature type="zinc finger region" description="Phorbol-ester/DAG-type 2" evidence="8">
    <location>
        <begin position="85"/>
        <end position="135"/>
    </location>
</feature>
<feature type="active site" description="Proton acceptor" evidence="7 10">
    <location>
        <position position="465"/>
    </location>
</feature>
<feature type="binding site" evidence="2">
    <location>
        <position position="171"/>
    </location>
    <ligand>
        <name>Ca(2+)</name>
        <dbReference type="ChEBI" id="CHEBI:29108"/>
        <label>1</label>
    </ligand>
</feature>
<feature type="binding site" evidence="2">
    <location>
        <position position="172"/>
    </location>
    <ligand>
        <name>Ca(2+)</name>
        <dbReference type="ChEBI" id="CHEBI:29108"/>
        <label>1</label>
    </ligand>
</feature>
<feature type="binding site" evidence="2">
    <location>
        <position position="172"/>
    </location>
    <ligand>
        <name>Ca(2+)</name>
        <dbReference type="ChEBI" id="CHEBI:29108"/>
        <label>2</label>
    </ligand>
</feature>
<feature type="binding site" evidence="2">
    <location>
        <position position="178"/>
    </location>
    <ligand>
        <name>Ca(2+)</name>
        <dbReference type="ChEBI" id="CHEBI:29108"/>
        <label>2</label>
    </ligand>
</feature>
<feature type="binding site" evidence="2">
    <location>
        <position position="231"/>
    </location>
    <ligand>
        <name>Ca(2+)</name>
        <dbReference type="ChEBI" id="CHEBI:29108"/>
        <label>1</label>
    </ligand>
</feature>
<feature type="binding site" evidence="2">
    <location>
        <position position="231"/>
    </location>
    <ligand>
        <name>Ca(2+)</name>
        <dbReference type="ChEBI" id="CHEBI:29108"/>
        <label>2</label>
    </ligand>
</feature>
<feature type="binding site" evidence="2">
    <location>
        <position position="232"/>
    </location>
    <ligand>
        <name>Ca(2+)</name>
        <dbReference type="ChEBI" id="CHEBI:29108"/>
        <label>2</label>
    </ligand>
</feature>
<feature type="binding site" evidence="2">
    <location>
        <position position="233"/>
    </location>
    <ligand>
        <name>Ca(2+)</name>
        <dbReference type="ChEBI" id="CHEBI:29108"/>
        <label>1</label>
    </ligand>
</feature>
<feature type="binding site" evidence="2">
    <location>
        <position position="233"/>
    </location>
    <ligand>
        <name>Ca(2+)</name>
        <dbReference type="ChEBI" id="CHEBI:29108"/>
        <label>2</label>
    </ligand>
</feature>
<feature type="binding site" evidence="2">
    <location>
        <position position="233"/>
    </location>
    <ligand>
        <name>Ca(2+)</name>
        <dbReference type="ChEBI" id="CHEBI:29108"/>
        <label>3</label>
    </ligand>
</feature>
<feature type="binding site" evidence="2">
    <location>
        <position position="236"/>
    </location>
    <ligand>
        <name>Ca(2+)</name>
        <dbReference type="ChEBI" id="CHEBI:29108"/>
        <label>3</label>
    </ligand>
</feature>
<feature type="binding site" evidence="2">
    <location>
        <position position="237"/>
    </location>
    <ligand>
        <name>Ca(2+)</name>
        <dbReference type="ChEBI" id="CHEBI:29108"/>
        <label>3</label>
    </ligand>
</feature>
<feature type="binding site" evidence="2">
    <location>
        <position position="239"/>
    </location>
    <ligand>
        <name>Ca(2+)</name>
        <dbReference type="ChEBI" id="CHEBI:29108"/>
        <label>1</label>
    </ligand>
</feature>
<feature type="binding site" evidence="2">
    <location>
        <position position="239"/>
    </location>
    <ligand>
        <name>Ca(2+)</name>
        <dbReference type="ChEBI" id="CHEBI:29108"/>
        <label>3</label>
    </ligand>
</feature>
<feature type="binding site" evidence="7">
    <location>
        <begin position="342"/>
        <end position="350"/>
    </location>
    <ligand>
        <name>ATP</name>
        <dbReference type="ChEBI" id="CHEBI:30616"/>
    </ligand>
</feature>
<feature type="binding site" evidence="7">
    <location>
        <position position="365"/>
    </location>
    <ligand>
        <name>ATP</name>
        <dbReference type="ChEBI" id="CHEBI:30616"/>
    </ligand>
</feature>
<feature type="modified residue" description="Phosphothreonine; by autocatalysis" evidence="1">
    <location>
        <position position="235"/>
    </location>
</feature>
<feature type="modified residue" description="Phosphoserine" evidence="3">
    <location>
        <position position="305"/>
    </location>
</feature>
<feature type="modified residue" description="Phosphoserine" evidence="3">
    <location>
        <position position="307"/>
    </location>
</feature>
<feature type="modified residue" description="Phosphoserine" evidence="3">
    <location>
        <position position="311"/>
    </location>
</feature>
<feature type="modified residue" description="Phosphoserine" evidence="3">
    <location>
        <position position="313"/>
    </location>
</feature>
<feature type="modified residue" description="Phosphoserine" evidence="3">
    <location>
        <position position="315"/>
    </location>
</feature>
<feature type="modified residue" description="Phosphothreonine" evidence="3">
    <location>
        <position position="317"/>
    </location>
</feature>
<feature type="modified residue" description="Phosphoserine" evidence="3">
    <location>
        <position position="358"/>
    </location>
</feature>
<feature type="modified residue" description="Phosphothreonine; by PDPK1" evidence="3">
    <location>
        <position position="499"/>
    </location>
</feature>
<feature type="modified residue" description="Phosphothreonine; by autocatalysis" evidence="5">
    <location>
        <position position="633"/>
    </location>
</feature>
<feature type="modified residue" description="Phosphothreonine; by autocatalysis" evidence="3">
    <location>
        <position position="640"/>
    </location>
</feature>
<feature type="modified residue" description="Phosphothreonine; by autocatalysis" evidence="3">
    <location>
        <position position="659"/>
    </location>
</feature>
<feature type="modified residue" description="Phosphotyrosine; by SYK" evidence="1">
    <location>
        <position position="660"/>
    </location>
</feature>
<feature type="modified residue" description="Phosphoserine" evidence="4">
    <location>
        <position position="672"/>
    </location>
</feature>
<feature type="non-terminal residue">
    <location>
        <position position="1"/>
    </location>
</feature>
<name>KPCG_BOVIN</name>
<comment type="function">
    <text evidence="2 3 4">Calcium-activated, phospholipid- and diacylglycerol (DAG)-dependent serine/threonine-protein kinase that plays diverse roles in neuronal cells and eye tissues, such as regulation of the neuronal receptors GRIA4/GLUR4 and GRIN1/NMDAR1, modulation of receptors and neuronal functions related to sensitivity to opiates, pain and alcohol, mediation of synaptic function and cell survival after ischemia, and inhibition of gap junction activity after oxidative stress. Binds and phosphorylates GRIA4/GLUR4 glutamate receptor and regulates its function by increasing plasma membrane-associated GRIA4 expression. In primary cerebellar neurons treated with the agonist 3,5-dihyidroxyphenylglycine, functions downstream of the metabotropic glutamate receptor GRM5/MGLUR5 and phosphorylates GRIN1/NMDAR1 receptor which plays a key role in synaptic plasticity, synaptogenesis, excitotoxicity, memory acquisition and learning. May be involved in the regulation of hippocampal long-term potentiation (LTP), but may be not necessary for the process of synaptic plasticity. May be involved in desensitization of mu-type opioid receptor-mediated G-protein activation in the spinal cord, and may be critical for the development and/or maintenance of morphine-induced reinforcing effects in the limbic forebrain. May modulate the functionality of mu-type-opioid receptors by participating in a signaling pathway which leads to the phosphorylation and degradation of opioid receptors. May also contributes to chronic morphine-induced changes in nociceptive processing. Plays a role in neuropathic pain mechanisms and contributes to the maintenance of the allodynia pain produced by peripheral inflammation. Plays an important role in initial sensitivity and tolerance to ethanol, by mediating the behavioral effects of ethanol as well as the effects of this drug on the GABA(A) receptors. During and after cerebral ischemia modulate neurotransmission and cell survival in synaptic membranes, and is involved in insulin-induced inhibition of necrosis, an important mechanism for minimizing ischemic injury. Required for the elimination of multiple climbing fibers during innervation of Purkinje cells in developing cerebellum. Is activated in lens epithelial cells upon hydrogen peroxide treatment, and phosphorylates connexin-43 (GJA1/CX43), resulting in disassembly of GJA1 gap junction plaques and inhibition of gap junction activity which could provide a protective effect against oxidative stress. Phosphorylates p53/TP53 and promotes p53/TP53-dependent apoptosis in response to DNA damage. Involved in the phase resetting of the cerebral cortex circadian clock during temporally restricted feeding. Stabilizes the core clock component BMAL1 by interfering with its ubiquitination, thus suppressing its degradation, resulting in phase resetting of the cerebral cortex clock. Phosphorylates and activates LRRK1, which phosphorylates RAB proteins involved in intracellular trafficking (By similarity).</text>
</comment>
<comment type="catalytic activity">
    <reaction evidence="2">
        <text>L-seryl-[protein] + ATP = O-phospho-L-seryl-[protein] + ADP + H(+)</text>
        <dbReference type="Rhea" id="RHEA:17989"/>
        <dbReference type="Rhea" id="RHEA-COMP:9863"/>
        <dbReference type="Rhea" id="RHEA-COMP:11604"/>
        <dbReference type="ChEBI" id="CHEBI:15378"/>
        <dbReference type="ChEBI" id="CHEBI:29999"/>
        <dbReference type="ChEBI" id="CHEBI:30616"/>
        <dbReference type="ChEBI" id="CHEBI:83421"/>
        <dbReference type="ChEBI" id="CHEBI:456216"/>
        <dbReference type="EC" id="2.7.11.13"/>
    </reaction>
</comment>
<comment type="catalytic activity">
    <reaction evidence="2">
        <text>L-threonyl-[protein] + ATP = O-phospho-L-threonyl-[protein] + ADP + H(+)</text>
        <dbReference type="Rhea" id="RHEA:46608"/>
        <dbReference type="Rhea" id="RHEA-COMP:11060"/>
        <dbReference type="Rhea" id="RHEA-COMP:11605"/>
        <dbReference type="ChEBI" id="CHEBI:15378"/>
        <dbReference type="ChEBI" id="CHEBI:30013"/>
        <dbReference type="ChEBI" id="CHEBI:30616"/>
        <dbReference type="ChEBI" id="CHEBI:61977"/>
        <dbReference type="ChEBI" id="CHEBI:456216"/>
        <dbReference type="EC" id="2.7.11.13"/>
    </reaction>
</comment>
<comment type="cofactor">
    <cofactor evidence="6">
        <name>Ca(2+)</name>
        <dbReference type="ChEBI" id="CHEBI:29108"/>
    </cofactor>
    <text evidence="2">Binds 3 Ca(2+) ions per subunit. The ions are bound to the C2 domain.</text>
</comment>
<comment type="activity regulation">
    <text>Classical (or conventional) PKCs (PRKCA, PRKCB and PRKCG) are activated by calcium and diacylglycerol (DAG) in the presence of phosphatidylserine. Three specific sites; Thr-499 (activation loop of the kinase domain), Thr-640 (turn motif) and Thr-659 (hydrophobic region), need to be phosphorylated for its full activation.</text>
</comment>
<comment type="subunit">
    <text evidence="2 3 4">Interacts with CDCP1 and GRIA4. Interacts with TP53INP1 and p53/TP53. Interacts with BMAL1.</text>
</comment>
<comment type="subcellular location">
    <subcellularLocation>
        <location evidence="3">Cytoplasm</location>
    </subcellularLocation>
    <subcellularLocation>
        <location evidence="1">Cytoplasm</location>
        <location evidence="1">Perinuclear region</location>
    </subcellularLocation>
    <subcellularLocation>
        <location evidence="3">Cell membrane</location>
        <topology evidence="1">Peripheral membrane protein</topology>
    </subcellularLocation>
    <subcellularLocation>
        <location evidence="3">Synapse</location>
        <location evidence="3">Synaptosome</location>
    </subcellularLocation>
    <subcellularLocation>
        <location evidence="4">Cell projection</location>
        <location evidence="4">Dendrite</location>
    </subcellularLocation>
    <text evidence="3">Translocates to synaptic membranes on stimulation.</text>
</comment>
<comment type="PTM">
    <text evidence="3">Autophosphorylation on Thr-659 appears to regulate motor functions of junctophilins, JPH3 and JPH4.</text>
</comment>
<comment type="PTM">
    <text evidence="2">Ubiquitinated.</text>
</comment>
<comment type="similarity">
    <text evidence="11">Belongs to the protein kinase superfamily. AGC Ser/Thr protein kinase family. PKC subfamily.</text>
</comment>
<organism>
    <name type="scientific">Bos taurus</name>
    <name type="common">Bovine</name>
    <dbReference type="NCBI Taxonomy" id="9913"/>
    <lineage>
        <taxon>Eukaryota</taxon>
        <taxon>Metazoa</taxon>
        <taxon>Chordata</taxon>
        <taxon>Craniata</taxon>
        <taxon>Vertebrata</taxon>
        <taxon>Euteleostomi</taxon>
        <taxon>Mammalia</taxon>
        <taxon>Eutheria</taxon>
        <taxon>Laurasiatheria</taxon>
        <taxon>Artiodactyla</taxon>
        <taxon>Ruminantia</taxon>
        <taxon>Pecora</taxon>
        <taxon>Bovidae</taxon>
        <taxon>Bovinae</taxon>
        <taxon>Bos</taxon>
    </lineage>
</organism>
<keyword id="KW-0067">ATP-binding</keyword>
<keyword id="KW-0090">Biological rhythms</keyword>
<keyword id="KW-0106">Calcium</keyword>
<keyword id="KW-1003">Cell membrane</keyword>
<keyword id="KW-0966">Cell projection</keyword>
<keyword id="KW-0963">Cytoplasm</keyword>
<keyword id="KW-0418">Kinase</keyword>
<keyword id="KW-0472">Membrane</keyword>
<keyword id="KW-0479">Metal-binding</keyword>
<keyword id="KW-0547">Nucleotide-binding</keyword>
<keyword id="KW-0597">Phosphoprotein</keyword>
<keyword id="KW-1185">Reference proteome</keyword>
<keyword id="KW-0677">Repeat</keyword>
<keyword id="KW-0723">Serine/threonine-protein kinase</keyword>
<keyword id="KW-0770">Synapse</keyword>
<keyword id="KW-0771">Synaptosome</keyword>
<keyword id="KW-0808">Transferase</keyword>
<keyword id="KW-0832">Ubl conjugation</keyword>
<keyword id="KW-0862">Zinc</keyword>
<keyword id="KW-0863">Zinc-finger</keyword>
<gene>
    <name type="primary">PRKCG</name>
</gene>
<reference key="1">
    <citation type="journal article" date="1986" name="Science">
        <title>Multiple, distinct forms of bovine and human protein kinase C suggest diversity in cellular signaling pathways.</title>
        <authorList>
            <person name="Coussens L."/>
            <person name="Parker P.J."/>
            <person name="Rhee L."/>
            <person name="Yang-Feng T.L."/>
            <person name="Chen E."/>
            <person name="Waterfield M.D."/>
            <person name="Francke U."/>
            <person name="Ullrich A."/>
        </authorList>
    </citation>
    <scope>NUCLEOTIDE SEQUENCE [MRNA]</scope>
</reference>
<reference key="2">
    <citation type="journal article" date="1988" name="Nature">
        <title>The molecular heterogeneity of protein kinase C and its implications for cellular regulation.</title>
        <authorList>
            <person name="Nishizuka Y."/>
        </authorList>
    </citation>
    <scope>REVIEW</scope>
</reference>
<accession>P05128</accession>
<protein>
    <recommendedName>
        <fullName>Protein kinase C gamma type</fullName>
        <shortName>PKC-gamma</shortName>
        <ecNumber evidence="2">2.7.11.13</ecNumber>
    </recommendedName>
</protein>
<sequence>RPLFCRKGALRQKVVHEVKSHKFTARFFKQPTFCSHCTDFIWGIGKQGLQCQVCSFVVHRRCHEFVTFECPGAGKGPQTDDPRNKHKFRLHSYSSPTFCDHCGSLLYGLVHQGMKCSCCEMNVHRRCVRSVPSLCGVDHTERRGRLQLEIRAPTSDEIHVTVGEARNLIPMDPNGLSDPYVKLKLIPDPRNLTKQKTRTVKATLNPVWNETFVFNLKPGDVERRLSVEVWDWDRTSRNDFMGAMSFGVSELLKAPVDGWYKLLNQEEGEYYNVPVADADNCNLLQKFEACNYPLELYERVRTGPSSSPIPSPSPSPTDSKRCFFGASPGRLHISDFSFLMVLGKGSFGKVMLAERRGSDELYAIKILKKDVIVQDDDVDCTLVEKRVLALGGRGPGGRPHFLTQLHSTFQTPDRLYFVMEYVTGGDLMYHIQQLGKFKEPHAAFYAAEIAIGLFFLHNQGIIYRDLKLDNVMLDAEGHIKITDFGMCKENVFPGSTTRTFCGTPDYIAPEIIAYQPYGKSVDWWSFGVLLYEMLAGQPPFDGEDEEELFQAIMEQTVTYPKSLSREAVAICKGFLTKHPAKRLGSGPDGEPTIRAHGFFRWIDWDRLERLEIAPPFRPRPCGRSGENFDKFFTRAAPALTPPDRLVLASIDQAEFQGFTYVNPDFVHPDARSPISPTPVPVM</sequence>
<evidence type="ECO:0000250" key="1"/>
<evidence type="ECO:0000250" key="2">
    <source>
        <dbReference type="UniProtKB" id="P05129"/>
    </source>
</evidence>
<evidence type="ECO:0000250" key="3">
    <source>
        <dbReference type="UniProtKB" id="P63318"/>
    </source>
</evidence>
<evidence type="ECO:0000250" key="4">
    <source>
        <dbReference type="UniProtKB" id="P63319"/>
    </source>
</evidence>
<evidence type="ECO:0000255" key="5"/>
<evidence type="ECO:0000255" key="6">
    <source>
        <dbReference type="PROSITE-ProRule" id="PRU00041"/>
    </source>
</evidence>
<evidence type="ECO:0000255" key="7">
    <source>
        <dbReference type="PROSITE-ProRule" id="PRU00159"/>
    </source>
</evidence>
<evidence type="ECO:0000255" key="8">
    <source>
        <dbReference type="PROSITE-ProRule" id="PRU00226"/>
    </source>
</evidence>
<evidence type="ECO:0000255" key="9">
    <source>
        <dbReference type="PROSITE-ProRule" id="PRU00618"/>
    </source>
</evidence>
<evidence type="ECO:0000255" key="10">
    <source>
        <dbReference type="PROSITE-ProRule" id="PRU10027"/>
    </source>
</evidence>
<evidence type="ECO:0000305" key="11"/>